<dbReference type="EMBL" id="CP000884">
    <property type="protein sequence ID" value="ABX37974.1"/>
    <property type="molecule type" value="Genomic_DNA"/>
</dbReference>
<dbReference type="RefSeq" id="WP_012207143.1">
    <property type="nucleotide sequence ID" value="NC_010002.1"/>
</dbReference>
<dbReference type="SMR" id="A9BNS9"/>
<dbReference type="STRING" id="398578.Daci_5345"/>
<dbReference type="GeneID" id="94690653"/>
<dbReference type="KEGG" id="dac:Daci_5345"/>
<dbReference type="eggNOG" id="COG0228">
    <property type="taxonomic scope" value="Bacteria"/>
</dbReference>
<dbReference type="HOGENOM" id="CLU_100590_5_1_4"/>
<dbReference type="Proteomes" id="UP000000784">
    <property type="component" value="Chromosome"/>
</dbReference>
<dbReference type="GO" id="GO:0005737">
    <property type="term" value="C:cytoplasm"/>
    <property type="evidence" value="ECO:0007669"/>
    <property type="project" value="UniProtKB-ARBA"/>
</dbReference>
<dbReference type="GO" id="GO:0015935">
    <property type="term" value="C:small ribosomal subunit"/>
    <property type="evidence" value="ECO:0007669"/>
    <property type="project" value="TreeGrafter"/>
</dbReference>
<dbReference type="GO" id="GO:0003735">
    <property type="term" value="F:structural constituent of ribosome"/>
    <property type="evidence" value="ECO:0007669"/>
    <property type="project" value="InterPro"/>
</dbReference>
<dbReference type="GO" id="GO:0006412">
    <property type="term" value="P:translation"/>
    <property type="evidence" value="ECO:0007669"/>
    <property type="project" value="UniProtKB-UniRule"/>
</dbReference>
<dbReference type="Gene3D" id="3.30.1320.10">
    <property type="match status" value="1"/>
</dbReference>
<dbReference type="HAMAP" id="MF_00385">
    <property type="entry name" value="Ribosomal_bS16"/>
    <property type="match status" value="1"/>
</dbReference>
<dbReference type="InterPro" id="IPR000307">
    <property type="entry name" value="Ribosomal_bS16"/>
</dbReference>
<dbReference type="InterPro" id="IPR023803">
    <property type="entry name" value="Ribosomal_bS16_dom_sf"/>
</dbReference>
<dbReference type="NCBIfam" id="TIGR00002">
    <property type="entry name" value="S16"/>
    <property type="match status" value="1"/>
</dbReference>
<dbReference type="PANTHER" id="PTHR12919">
    <property type="entry name" value="30S RIBOSOMAL PROTEIN S16"/>
    <property type="match status" value="1"/>
</dbReference>
<dbReference type="PANTHER" id="PTHR12919:SF20">
    <property type="entry name" value="SMALL RIBOSOMAL SUBUNIT PROTEIN BS16M"/>
    <property type="match status" value="1"/>
</dbReference>
<dbReference type="Pfam" id="PF00886">
    <property type="entry name" value="Ribosomal_S16"/>
    <property type="match status" value="1"/>
</dbReference>
<dbReference type="SUPFAM" id="SSF54565">
    <property type="entry name" value="Ribosomal protein S16"/>
    <property type="match status" value="1"/>
</dbReference>
<keyword id="KW-1185">Reference proteome</keyword>
<keyword id="KW-0687">Ribonucleoprotein</keyword>
<keyword id="KW-0689">Ribosomal protein</keyword>
<proteinExistence type="inferred from homology"/>
<evidence type="ECO:0000255" key="1">
    <source>
        <dbReference type="HAMAP-Rule" id="MF_00385"/>
    </source>
</evidence>
<evidence type="ECO:0000305" key="2"/>
<accession>A9BNS9</accession>
<comment type="similarity">
    <text evidence="1">Belongs to the bacterial ribosomal protein bS16 family.</text>
</comment>
<name>RS16_DELAS</name>
<organism>
    <name type="scientific">Delftia acidovorans (strain DSM 14801 / SPH-1)</name>
    <dbReference type="NCBI Taxonomy" id="398578"/>
    <lineage>
        <taxon>Bacteria</taxon>
        <taxon>Pseudomonadati</taxon>
        <taxon>Pseudomonadota</taxon>
        <taxon>Betaproteobacteria</taxon>
        <taxon>Burkholderiales</taxon>
        <taxon>Comamonadaceae</taxon>
        <taxon>Delftia</taxon>
    </lineage>
</organism>
<reference key="1">
    <citation type="submission" date="2007-11" db="EMBL/GenBank/DDBJ databases">
        <title>Complete sequence of Delftia acidovorans DSM 14801 / SPH-1.</title>
        <authorList>
            <person name="Copeland A."/>
            <person name="Lucas S."/>
            <person name="Lapidus A."/>
            <person name="Barry K."/>
            <person name="Glavina del Rio T."/>
            <person name="Dalin E."/>
            <person name="Tice H."/>
            <person name="Pitluck S."/>
            <person name="Lowry S."/>
            <person name="Clum A."/>
            <person name="Schmutz J."/>
            <person name="Larimer F."/>
            <person name="Land M."/>
            <person name="Hauser L."/>
            <person name="Kyrpides N."/>
            <person name="Kim E."/>
            <person name="Schleheck D."/>
            <person name="Richardson P."/>
        </authorList>
    </citation>
    <scope>NUCLEOTIDE SEQUENCE [LARGE SCALE GENOMIC DNA]</scope>
    <source>
        <strain>DSM 14801 / SPH-1</strain>
    </source>
</reference>
<sequence>MVVIRLSRGGSKARPFYNIVAADKRVRRDGSFIERLGFYNPNARGGEEGLRVALDRVNYWKGVGAQASETAERLIKQATQKTAA</sequence>
<feature type="chain" id="PRO_1000196383" description="Small ribosomal subunit protein bS16">
    <location>
        <begin position="1"/>
        <end position="84"/>
    </location>
</feature>
<protein>
    <recommendedName>
        <fullName evidence="1">Small ribosomal subunit protein bS16</fullName>
    </recommendedName>
    <alternativeName>
        <fullName evidence="2">30S ribosomal protein S16</fullName>
    </alternativeName>
</protein>
<gene>
    <name evidence="1" type="primary">rpsP</name>
    <name type="ordered locus">Daci_5345</name>
</gene>